<reference key="1">
    <citation type="journal article" date="2011" name="Proc. Natl. Acad. Sci. U.S.A.">
        <title>Genomic anatomy of Escherichia coli O157:H7 outbreaks.</title>
        <authorList>
            <person name="Eppinger M."/>
            <person name="Mammel M.K."/>
            <person name="Leclerc J.E."/>
            <person name="Ravel J."/>
            <person name="Cebula T.A."/>
        </authorList>
    </citation>
    <scope>NUCLEOTIDE SEQUENCE [LARGE SCALE GENOMIC DNA]</scope>
    <source>
        <strain>EC4115 / EHEC</strain>
    </source>
</reference>
<sequence>MALLPDKEKLLRNFLRCANWEEKYLYIIELGQRLPELRDEDRSPQNSIQGCQSQVWIVMRQNAQGIIELQGDSDAAIVKGLIAVVFILYDQMTPQDVVNFDVRPWFEKMALTQHLTPSRSQGLEAMIRAIRAKAAALS</sequence>
<protein>
    <recommendedName>
        <fullName evidence="1">Cysteine desulfuration protein SufE</fullName>
    </recommendedName>
</protein>
<keyword id="KW-0963">Cytoplasm</keyword>
<evidence type="ECO:0000255" key="1">
    <source>
        <dbReference type="HAMAP-Rule" id="MF_01832"/>
    </source>
</evidence>
<dbReference type="EMBL" id="CP001164">
    <property type="protein sequence ID" value="ACI39521.1"/>
    <property type="molecule type" value="Genomic_DNA"/>
</dbReference>
<dbReference type="RefSeq" id="WP_001196532.1">
    <property type="nucleotide sequence ID" value="NC_011353.1"/>
</dbReference>
<dbReference type="SMR" id="B5Z4B2"/>
<dbReference type="KEGG" id="ecf:ECH74115_2393"/>
<dbReference type="HOGENOM" id="CLU_124502_1_1_6"/>
<dbReference type="UniPathway" id="UPA00266"/>
<dbReference type="GO" id="GO:0005737">
    <property type="term" value="C:cytoplasm"/>
    <property type="evidence" value="ECO:0007669"/>
    <property type="project" value="UniProtKB-SubCell"/>
</dbReference>
<dbReference type="GO" id="GO:0016226">
    <property type="term" value="P:iron-sulfur cluster assembly"/>
    <property type="evidence" value="ECO:0007669"/>
    <property type="project" value="InterPro"/>
</dbReference>
<dbReference type="GO" id="GO:0006790">
    <property type="term" value="P:sulfur compound metabolic process"/>
    <property type="evidence" value="ECO:0007669"/>
    <property type="project" value="InterPro"/>
</dbReference>
<dbReference type="FunFam" id="3.90.1010.10:FF:000004">
    <property type="entry name" value="Cysteine desulfuration protein SufE"/>
    <property type="match status" value="1"/>
</dbReference>
<dbReference type="Gene3D" id="3.90.1010.10">
    <property type="match status" value="1"/>
</dbReference>
<dbReference type="HAMAP" id="MF_01832">
    <property type="entry name" value="SufE"/>
    <property type="match status" value="1"/>
</dbReference>
<dbReference type="InterPro" id="IPR023939">
    <property type="entry name" value="Cysteine_desulfuration_SufE"/>
</dbReference>
<dbReference type="InterPro" id="IPR003808">
    <property type="entry name" value="Fe-S_metab-assoc_dom"/>
</dbReference>
<dbReference type="NCBIfam" id="NF006792">
    <property type="entry name" value="PRK09296.1"/>
    <property type="match status" value="1"/>
</dbReference>
<dbReference type="PANTHER" id="PTHR43597:SF3">
    <property type="entry name" value="CYSTEINE DESULFURATION PROTEIN SUFE"/>
    <property type="match status" value="1"/>
</dbReference>
<dbReference type="PANTHER" id="PTHR43597">
    <property type="entry name" value="SULFUR ACCEPTOR PROTEIN CSDE"/>
    <property type="match status" value="1"/>
</dbReference>
<dbReference type="Pfam" id="PF02657">
    <property type="entry name" value="SufE"/>
    <property type="match status" value="1"/>
</dbReference>
<dbReference type="SUPFAM" id="SSF82649">
    <property type="entry name" value="SufE/NifU"/>
    <property type="match status" value="1"/>
</dbReference>
<gene>
    <name evidence="1" type="primary">sufE</name>
    <name type="ordered locus">ECH74115_2393</name>
</gene>
<accession>B5Z4B2</accession>
<comment type="function">
    <text evidence="1">Participates in cysteine desulfuration mediated by SufS. Cysteine desulfuration mobilizes sulfur from L-cysteine to yield L-alanine and constitutes an essential step in sulfur metabolism for biosynthesis of a variety of sulfur-containing biomolecules. Functions as a sulfur acceptor for SufS, by mediating the direct transfer of the sulfur atom from the S-sulfanylcysteine of SufS, an intermediate product of cysteine desulfuration process.</text>
</comment>
<comment type="pathway">
    <text evidence="1">Cofactor biosynthesis; iron-sulfur cluster biosynthesis.</text>
</comment>
<comment type="subunit">
    <text evidence="1">Homodimer. Interacts with SufS.</text>
</comment>
<comment type="subcellular location">
    <subcellularLocation>
        <location evidence="1">Cytoplasm</location>
    </subcellularLocation>
</comment>
<comment type="similarity">
    <text evidence="1">Belongs to the SufE family.</text>
</comment>
<name>SUFE_ECO5E</name>
<feature type="chain" id="PRO_1000188320" description="Cysteine desulfuration protein SufE">
    <location>
        <begin position="1"/>
        <end position="138"/>
    </location>
</feature>
<feature type="active site" description="Cysteine persulfide intermediate" evidence="1">
    <location>
        <position position="51"/>
    </location>
</feature>
<organism>
    <name type="scientific">Escherichia coli O157:H7 (strain EC4115 / EHEC)</name>
    <dbReference type="NCBI Taxonomy" id="444450"/>
    <lineage>
        <taxon>Bacteria</taxon>
        <taxon>Pseudomonadati</taxon>
        <taxon>Pseudomonadota</taxon>
        <taxon>Gammaproteobacteria</taxon>
        <taxon>Enterobacterales</taxon>
        <taxon>Enterobacteriaceae</taxon>
        <taxon>Escherichia</taxon>
    </lineage>
</organism>
<proteinExistence type="inferred from homology"/>